<protein>
    <recommendedName>
        <fullName>Histone H2A.Z</fullName>
    </recommendedName>
</protein>
<organism>
    <name type="scientific">Monascus purpureus</name>
    <name type="common">Red mold</name>
    <name type="synonym">Monascus anka</name>
    <dbReference type="NCBI Taxonomy" id="5098"/>
    <lineage>
        <taxon>Eukaryota</taxon>
        <taxon>Fungi</taxon>
        <taxon>Dikarya</taxon>
        <taxon>Ascomycota</taxon>
        <taxon>Pezizomycotina</taxon>
        <taxon>Eurotiomycetes</taxon>
        <taxon>Eurotiomycetidae</taxon>
        <taxon>Eurotiales</taxon>
        <taxon>Aspergillaceae</taxon>
        <taxon>Monascus</taxon>
    </lineage>
</organism>
<comment type="function">
    <text evidence="1">Variant histone H2A which can replace H2A in some nucleosomes. Nucleosomes wrap and compact DNA into chromatin, limiting DNA accessibility to the cellular machineries which require DNA as a template. Histones thereby play a central role in transcription regulation, DNA repair, DNA replication and chromosomal stability. DNA accessibility is regulated via a complex set of post-translational modifications of histones, also called histone code, and nucleosome remodeling. This variant is enriched at promoters, it may keep them in a repressed state until the appropriate activation signal is received. Near telomeres, it may counteract gene silencing caused by the spread of heterochromatin proteins. Required for the RNA polymerase II and SPT15/TBP recruitment to the target genes. Involved in chromosome stability (By similarity).</text>
</comment>
<comment type="subunit">
    <text evidence="1">The nucleosome is a histone octamer containing two molecules each of H2A, H2B, H3 and H4 assembled in one H3-H4 heterotetramer and two H2A-H2B heterodimers. The octamer wraps approximately 147 bp of DNA. H2A or its variant H2A.Z forms a heterodimer with H2B. H2A.Z associates with the VPS72/SWC2 subunit of the SWR1 chromatin remodeling complex. Also interacts with RBP1/DNA-directed RNA polymerase II largest subunit (By similarity).</text>
</comment>
<comment type="subcellular location">
    <subcellularLocation>
        <location evidence="1">Nucleus</location>
    </subcellularLocation>
    <subcellularLocation>
        <location evidence="1">Chromosome</location>
    </subcellularLocation>
</comment>
<comment type="PTM">
    <text evidence="1">Acetylated once deposited into chromatin.</text>
</comment>
<comment type="similarity">
    <text evidence="3">Belongs to the histone H2A family.</text>
</comment>
<sequence length="136" mass="14645">MPGGKGKSIGGKGDPKGSGKAQKSHSAKAGLQFPCGRVKRFLKNNTQNKMRVGAKAAVYVTAVLEYLTAEVLELAGNAAKDLKVKRITPRHLQLAIRGDEELDTLIRATIAFGGVLPRINRALLLKVEQKKKKTEA</sequence>
<gene>
    <name type="primary">HTZ1</name>
</gene>
<reference key="1">
    <citation type="submission" date="2006-08" db="EMBL/GenBank/DDBJ databases">
        <title>Monascus purpureus KCCM11832 genomic library clone pMGPD28 containing gpd1 gene.</title>
        <authorList>
            <person name="Kim J.G."/>
            <person name="Choi Y.D."/>
            <person name="Kim S.U."/>
        </authorList>
    </citation>
    <scope>NUCLEOTIDE SEQUENCE [GENOMIC DNA]</scope>
    <source>
        <strain>ATCC 16360 / CBS 283.34 / JCM 6934 / NBRC 4478</strain>
    </source>
</reference>
<feature type="chain" id="PRO_0000297725" description="Histone H2A.Z">
    <location>
        <begin position="1"/>
        <end position="136"/>
    </location>
</feature>
<feature type="region of interest" description="Disordered" evidence="2">
    <location>
        <begin position="1"/>
        <end position="29"/>
    </location>
</feature>
<feature type="compositionally biased region" description="Gly residues" evidence="2">
    <location>
        <begin position="1"/>
        <end position="12"/>
    </location>
</feature>
<feature type="modified residue" description="N6-acetyllysine" evidence="1">
    <location>
        <position position="5"/>
    </location>
</feature>
<feature type="modified residue" description="N6-acetyllysine" evidence="1">
    <location>
        <position position="12"/>
    </location>
</feature>
<name>H2AZ_MONPU</name>
<proteinExistence type="inferred from homology"/>
<keyword id="KW-0007">Acetylation</keyword>
<keyword id="KW-0158">Chromosome</keyword>
<keyword id="KW-0238">DNA-binding</keyword>
<keyword id="KW-0544">Nucleosome core</keyword>
<keyword id="KW-0539">Nucleus</keyword>
<dbReference type="EMBL" id="DQ923591">
    <property type="protein sequence ID" value="ABI74741.1"/>
    <property type="molecule type" value="Genomic_DNA"/>
</dbReference>
<dbReference type="SMR" id="Q09FM9"/>
<dbReference type="OrthoDB" id="9421954at2759"/>
<dbReference type="GO" id="GO:0000786">
    <property type="term" value="C:nucleosome"/>
    <property type="evidence" value="ECO:0007669"/>
    <property type="project" value="UniProtKB-KW"/>
</dbReference>
<dbReference type="GO" id="GO:0005634">
    <property type="term" value="C:nucleus"/>
    <property type="evidence" value="ECO:0007669"/>
    <property type="project" value="UniProtKB-SubCell"/>
</dbReference>
<dbReference type="GO" id="GO:0003677">
    <property type="term" value="F:DNA binding"/>
    <property type="evidence" value="ECO:0007669"/>
    <property type="project" value="UniProtKB-KW"/>
</dbReference>
<dbReference type="GO" id="GO:0046982">
    <property type="term" value="F:protein heterodimerization activity"/>
    <property type="evidence" value="ECO:0007669"/>
    <property type="project" value="InterPro"/>
</dbReference>
<dbReference type="GO" id="GO:0030527">
    <property type="term" value="F:structural constituent of chromatin"/>
    <property type="evidence" value="ECO:0007669"/>
    <property type="project" value="InterPro"/>
</dbReference>
<dbReference type="CDD" id="cd00074">
    <property type="entry name" value="HFD_H2A"/>
    <property type="match status" value="1"/>
</dbReference>
<dbReference type="FunFam" id="1.10.20.10:FF:000021">
    <property type="entry name" value="Histone H2A"/>
    <property type="match status" value="1"/>
</dbReference>
<dbReference type="Gene3D" id="1.10.20.10">
    <property type="entry name" value="Histone, subunit A"/>
    <property type="match status" value="1"/>
</dbReference>
<dbReference type="InterPro" id="IPR009072">
    <property type="entry name" value="Histone-fold"/>
</dbReference>
<dbReference type="InterPro" id="IPR002119">
    <property type="entry name" value="Histone_H2A"/>
</dbReference>
<dbReference type="InterPro" id="IPR007125">
    <property type="entry name" value="Histone_H2A/H2B/H3"/>
</dbReference>
<dbReference type="InterPro" id="IPR032454">
    <property type="entry name" value="Histone_H2A_C"/>
</dbReference>
<dbReference type="PANTHER" id="PTHR23430">
    <property type="entry name" value="HISTONE H2A"/>
    <property type="match status" value="1"/>
</dbReference>
<dbReference type="Pfam" id="PF00125">
    <property type="entry name" value="Histone"/>
    <property type="match status" value="1"/>
</dbReference>
<dbReference type="Pfam" id="PF16211">
    <property type="entry name" value="Histone_H2A_C"/>
    <property type="match status" value="1"/>
</dbReference>
<dbReference type="PRINTS" id="PR00620">
    <property type="entry name" value="HISTONEH2A"/>
</dbReference>
<dbReference type="SMART" id="SM00414">
    <property type="entry name" value="H2A"/>
    <property type="match status" value="1"/>
</dbReference>
<dbReference type="SUPFAM" id="SSF47113">
    <property type="entry name" value="Histone-fold"/>
    <property type="match status" value="1"/>
</dbReference>
<evidence type="ECO:0000250" key="1"/>
<evidence type="ECO:0000256" key="2">
    <source>
        <dbReference type="SAM" id="MobiDB-lite"/>
    </source>
</evidence>
<evidence type="ECO:0000305" key="3"/>
<accession>Q09FM9</accession>